<keyword id="KW-0963">Cytoplasm</keyword>
<keyword id="KW-0903">Direct protein sequencing</keyword>
<keyword id="KW-0479">Metal-binding</keyword>
<keyword id="KW-1185">Reference proteome</keyword>
<keyword id="KW-0687">Ribonucleoprotein</keyword>
<keyword id="KW-0689">Ribosomal protein</keyword>
<keyword id="KW-0694">RNA-binding</keyword>
<keyword id="KW-0699">rRNA-binding</keyword>
<keyword id="KW-0862">Zinc</keyword>
<keyword id="KW-0863">Zinc-finger</keyword>
<name>RL37A_SCHPO</name>
<sequence length="89" mass="9961">MTKGTQSFGMRHNKSHTICRRCGKRSFHIQKSTCACCGYPAAKTRSYNWGAKAKRRRTTGTGRMSYLKKVHRSFKNGFRAGKPTSAATA</sequence>
<organism>
    <name type="scientific">Schizosaccharomyces pombe (strain 972 / ATCC 24843)</name>
    <name type="common">Fission yeast</name>
    <dbReference type="NCBI Taxonomy" id="284812"/>
    <lineage>
        <taxon>Eukaryota</taxon>
        <taxon>Fungi</taxon>
        <taxon>Dikarya</taxon>
        <taxon>Ascomycota</taxon>
        <taxon>Taphrinomycotina</taxon>
        <taxon>Schizosaccharomycetes</taxon>
        <taxon>Schizosaccharomycetales</taxon>
        <taxon>Schizosaccharomycetaceae</taxon>
        <taxon>Schizosaccharomyces</taxon>
    </lineage>
</organism>
<reference key="1">
    <citation type="submission" date="1997-12" db="EMBL/GenBank/DDBJ databases">
        <title>S.pombe ribosomal protein L37 homolog.</title>
        <authorList>
            <person name="Kawamukai M."/>
        </authorList>
    </citation>
    <scope>NUCLEOTIDE SEQUENCE [MRNA]</scope>
</reference>
<reference key="2">
    <citation type="journal article" date="2002" name="Nature">
        <title>The genome sequence of Schizosaccharomyces pombe.</title>
        <authorList>
            <person name="Wood V."/>
            <person name="Gwilliam R."/>
            <person name="Rajandream M.A."/>
            <person name="Lyne M.H."/>
            <person name="Lyne R."/>
            <person name="Stewart A."/>
            <person name="Sgouros J.G."/>
            <person name="Peat N."/>
            <person name="Hayles J."/>
            <person name="Baker S.G."/>
            <person name="Basham D."/>
            <person name="Bowman S."/>
            <person name="Brooks K."/>
            <person name="Brown D."/>
            <person name="Brown S."/>
            <person name="Chillingworth T."/>
            <person name="Churcher C.M."/>
            <person name="Collins M."/>
            <person name="Connor R."/>
            <person name="Cronin A."/>
            <person name="Davis P."/>
            <person name="Feltwell T."/>
            <person name="Fraser A."/>
            <person name="Gentles S."/>
            <person name="Goble A."/>
            <person name="Hamlin N."/>
            <person name="Harris D.E."/>
            <person name="Hidalgo J."/>
            <person name="Hodgson G."/>
            <person name="Holroyd S."/>
            <person name="Hornsby T."/>
            <person name="Howarth S."/>
            <person name="Huckle E.J."/>
            <person name="Hunt S."/>
            <person name="Jagels K."/>
            <person name="James K.D."/>
            <person name="Jones L."/>
            <person name="Jones M."/>
            <person name="Leather S."/>
            <person name="McDonald S."/>
            <person name="McLean J."/>
            <person name="Mooney P."/>
            <person name="Moule S."/>
            <person name="Mungall K.L."/>
            <person name="Murphy L.D."/>
            <person name="Niblett D."/>
            <person name="Odell C."/>
            <person name="Oliver K."/>
            <person name="O'Neil S."/>
            <person name="Pearson D."/>
            <person name="Quail M.A."/>
            <person name="Rabbinowitsch E."/>
            <person name="Rutherford K.M."/>
            <person name="Rutter S."/>
            <person name="Saunders D."/>
            <person name="Seeger K."/>
            <person name="Sharp S."/>
            <person name="Skelton J."/>
            <person name="Simmonds M.N."/>
            <person name="Squares R."/>
            <person name="Squares S."/>
            <person name="Stevens K."/>
            <person name="Taylor K."/>
            <person name="Taylor R.G."/>
            <person name="Tivey A."/>
            <person name="Walsh S.V."/>
            <person name="Warren T."/>
            <person name="Whitehead S."/>
            <person name="Woodward J.R."/>
            <person name="Volckaert G."/>
            <person name="Aert R."/>
            <person name="Robben J."/>
            <person name="Grymonprez B."/>
            <person name="Weltjens I."/>
            <person name="Vanstreels E."/>
            <person name="Rieger M."/>
            <person name="Schaefer M."/>
            <person name="Mueller-Auer S."/>
            <person name="Gabel C."/>
            <person name="Fuchs M."/>
            <person name="Duesterhoeft A."/>
            <person name="Fritzc C."/>
            <person name="Holzer E."/>
            <person name="Moestl D."/>
            <person name="Hilbert H."/>
            <person name="Borzym K."/>
            <person name="Langer I."/>
            <person name="Beck A."/>
            <person name="Lehrach H."/>
            <person name="Reinhardt R."/>
            <person name="Pohl T.M."/>
            <person name="Eger P."/>
            <person name="Zimmermann W."/>
            <person name="Wedler H."/>
            <person name="Wambutt R."/>
            <person name="Purnelle B."/>
            <person name="Goffeau A."/>
            <person name="Cadieu E."/>
            <person name="Dreano S."/>
            <person name="Gloux S."/>
            <person name="Lelaure V."/>
            <person name="Mottier S."/>
            <person name="Galibert F."/>
            <person name="Aves S.J."/>
            <person name="Xiang Z."/>
            <person name="Hunt C."/>
            <person name="Moore K."/>
            <person name="Hurst S.M."/>
            <person name="Lucas M."/>
            <person name="Rochet M."/>
            <person name="Gaillardin C."/>
            <person name="Tallada V.A."/>
            <person name="Garzon A."/>
            <person name="Thode G."/>
            <person name="Daga R.R."/>
            <person name="Cruzado L."/>
            <person name="Jimenez J."/>
            <person name="Sanchez M."/>
            <person name="del Rey F."/>
            <person name="Benito J."/>
            <person name="Dominguez A."/>
            <person name="Revuelta J.L."/>
            <person name="Moreno S."/>
            <person name="Armstrong J."/>
            <person name="Forsburg S.L."/>
            <person name="Cerutti L."/>
            <person name="Lowe T."/>
            <person name="McCombie W.R."/>
            <person name="Paulsen I."/>
            <person name="Potashkin J."/>
            <person name="Shpakovski G.V."/>
            <person name="Ussery D."/>
            <person name="Barrell B.G."/>
            <person name="Nurse P."/>
        </authorList>
    </citation>
    <scope>NUCLEOTIDE SEQUENCE [LARGE SCALE GENOMIC DNA]</scope>
    <source>
        <strain>972 / ATCC 24843</strain>
    </source>
</reference>
<reference key="3">
    <citation type="journal article" date="1983" name="Mol. Gen. Genet.">
        <title>Yeast ribosomal proteins: VII. Cytoplasmic ribosomal proteins from Schizosaccharomyces pombe.</title>
        <authorList>
            <person name="Otaka E."/>
            <person name="Higo K."/>
            <person name="Itoh T."/>
        </authorList>
    </citation>
    <scope>PROTEIN SEQUENCE OF 2-24</scope>
</reference>
<reference key="4">
    <citation type="journal article" date="2006" name="Nat. Biotechnol.">
        <title>ORFeome cloning and global analysis of protein localization in the fission yeast Schizosaccharomyces pombe.</title>
        <authorList>
            <person name="Matsuyama A."/>
            <person name="Arai R."/>
            <person name="Yashiroda Y."/>
            <person name="Shirai A."/>
            <person name="Kamata A."/>
            <person name="Sekido S."/>
            <person name="Kobayashi Y."/>
            <person name="Hashimoto A."/>
            <person name="Hamamoto M."/>
            <person name="Hiraoka Y."/>
            <person name="Horinouchi S."/>
            <person name="Yoshida M."/>
        </authorList>
    </citation>
    <scope>SUBCELLULAR LOCATION [LARGE SCALE ANALYSIS]</scope>
</reference>
<feature type="initiator methionine" description="Removed" evidence="5">
    <location>
        <position position="1"/>
    </location>
</feature>
<feature type="chain" id="PRO_0000139720" description="Large ribosomal subunit protein eL37A">
    <location>
        <begin position="2"/>
        <end position="89"/>
    </location>
</feature>
<feature type="zinc finger region" description="C4-type" evidence="3">
    <location>
        <begin position="19"/>
        <end position="37"/>
    </location>
</feature>
<feature type="binding site" evidence="1">
    <location>
        <position position="19"/>
    </location>
    <ligand>
        <name>Zn(2+)</name>
        <dbReference type="ChEBI" id="CHEBI:29105"/>
    </ligand>
</feature>
<feature type="binding site" evidence="1">
    <location>
        <position position="22"/>
    </location>
    <ligand>
        <name>Zn(2+)</name>
        <dbReference type="ChEBI" id="CHEBI:29105"/>
    </ligand>
</feature>
<feature type="binding site" evidence="1">
    <location>
        <position position="34"/>
    </location>
    <ligand>
        <name>Zn(2+)</name>
        <dbReference type="ChEBI" id="CHEBI:29105"/>
    </ligand>
</feature>
<feature type="binding site" evidence="1">
    <location>
        <position position="37"/>
    </location>
    <ligand>
        <name>Zn(2+)</name>
        <dbReference type="ChEBI" id="CHEBI:29105"/>
    </ligand>
</feature>
<feature type="sequence conflict" description="In Ref. 3; AA sequence." evidence="7" ref="3">
    <original>C</original>
    <variation>G</variation>
    <location>
        <position position="19"/>
    </location>
</feature>
<feature type="sequence conflict" description="In Ref. 3; AA sequence." evidence="7" ref="3">
    <original>C</original>
    <variation>K</variation>
    <location>
        <position position="22"/>
    </location>
</feature>
<protein>
    <recommendedName>
        <fullName evidence="7">Large ribosomal subunit protein eL37A</fullName>
    </recommendedName>
    <alternativeName>
        <fullName>60S ribosomal protein L37-A</fullName>
    </alternativeName>
    <alternativeName>
        <fullName evidence="6">SP-L27</fullName>
    </alternativeName>
</protein>
<accession>P59289</accession>
<gene>
    <name type="primary">rpl3703</name>
    <name type="synonym">rpl37a</name>
    <name type="ORF">SPAPB17E12.05</name>
</gene>
<proteinExistence type="evidence at protein level"/>
<comment type="function">
    <text evidence="2">Component of the ribosome, a large ribonucleoprotein complex responsible for the synthesis of proteins in the cell. The small ribosomal subunit (SSU) binds messenger RNAs (mRNAs) and translates the encoded message by selecting cognate aminoacyl-transfer RNA (tRNA) molecules. The large subunit (LSU) contains the ribosomal catalytic site termed the peptidyl transferase center (PTC), which catalyzes the formation of peptide bonds, thereby polymerizing the amino acids delivered by tRNAs into a polypeptide chain. The nascent polypeptides leave the ribosome through a tunnel in the LSU and interact with protein factors that function in enzymatic processing, targeting, and the membrane insertion of nascent chains at the exit of the ribosomal tunnel.</text>
</comment>
<comment type="cofactor">
    <cofactor evidence="2">
        <name>Zn(2+)</name>
        <dbReference type="ChEBI" id="CHEBI:29105"/>
    </cofactor>
    <text evidence="2">Binds 1 zinc ion per subunit.</text>
</comment>
<comment type="subunit">
    <text evidence="2">Component of the large ribosomal subunit (LSU). Mature yeast ribosomes consist of a small (40S) and a large (60S) subunit. The 40S small subunit contains 1 molecule of ribosomal RNA (18S rRNA) and at least 33 different proteins. The large 60S subunit contains 3 rRNA molecules (25S, 5.8S and 5S rRNA) and at least 46 different proteins.</text>
</comment>
<comment type="subcellular location">
    <subcellularLocation>
        <location evidence="4">Cytoplasm</location>
    </subcellularLocation>
</comment>
<comment type="miscellaneous">
    <text>There are 2 genes for eL37 in S.pombe.</text>
</comment>
<comment type="similarity">
    <text evidence="7">Belongs to the eukaryotic ribosomal protein eL37 family.</text>
</comment>
<evidence type="ECO:0000250" key="1"/>
<evidence type="ECO:0000250" key="2">
    <source>
        <dbReference type="UniProtKB" id="P49166"/>
    </source>
</evidence>
<evidence type="ECO:0000255" key="3"/>
<evidence type="ECO:0000269" key="4">
    <source>
    </source>
</evidence>
<evidence type="ECO:0000269" key="5">
    <source>
    </source>
</evidence>
<evidence type="ECO:0000303" key="6">
    <source>
    </source>
</evidence>
<evidence type="ECO:0000305" key="7"/>
<dbReference type="EMBL" id="AB009637">
    <property type="protein sequence ID" value="BAA24013.1"/>
    <property type="molecule type" value="mRNA"/>
</dbReference>
<dbReference type="EMBL" id="CU329670">
    <property type="protein sequence ID" value="CAD27498.1"/>
    <property type="molecule type" value="Genomic_DNA"/>
</dbReference>
<dbReference type="PIR" id="T43306">
    <property type="entry name" value="T43306"/>
</dbReference>
<dbReference type="RefSeq" id="NP_001018221.1">
    <property type="nucleotide sequence ID" value="NM_001018701.2"/>
</dbReference>
<dbReference type="SMR" id="P59289"/>
<dbReference type="BioGRID" id="280483">
    <property type="interactions" value="4"/>
</dbReference>
<dbReference type="FunCoup" id="P59289">
    <property type="interactions" value="250"/>
</dbReference>
<dbReference type="STRING" id="284812.P59289"/>
<dbReference type="iPTMnet" id="P59289"/>
<dbReference type="PaxDb" id="4896-SPAPB17E12.05.1"/>
<dbReference type="EnsemblFungi" id="SPAPB17E12.05.1">
    <property type="protein sequence ID" value="SPAPB17E12.05.1:pep"/>
    <property type="gene ID" value="SPAPB17E12.05"/>
</dbReference>
<dbReference type="GeneID" id="3361407"/>
<dbReference type="KEGG" id="spo:3361407"/>
<dbReference type="PomBase" id="SPAPB17E12.05">
    <property type="gene designation" value="rpl3703"/>
</dbReference>
<dbReference type="VEuPathDB" id="FungiDB:SPAPB17E12.05"/>
<dbReference type="eggNOG" id="KOG3475">
    <property type="taxonomic scope" value="Eukaryota"/>
</dbReference>
<dbReference type="HOGENOM" id="CLU_150908_2_1_1"/>
<dbReference type="InParanoid" id="P59289"/>
<dbReference type="OMA" id="NGFRENI"/>
<dbReference type="PhylomeDB" id="P59289"/>
<dbReference type="PRO" id="PR:P59289"/>
<dbReference type="Proteomes" id="UP000002485">
    <property type="component" value="Chromosome I"/>
</dbReference>
<dbReference type="GO" id="GO:0005829">
    <property type="term" value="C:cytosol"/>
    <property type="evidence" value="ECO:0007005"/>
    <property type="project" value="PomBase"/>
</dbReference>
<dbReference type="GO" id="GO:0022625">
    <property type="term" value="C:cytosolic large ribosomal subunit"/>
    <property type="evidence" value="ECO:0000318"/>
    <property type="project" value="GO_Central"/>
</dbReference>
<dbReference type="GO" id="GO:0003723">
    <property type="term" value="F:RNA binding"/>
    <property type="evidence" value="ECO:0000318"/>
    <property type="project" value="GO_Central"/>
</dbReference>
<dbReference type="GO" id="GO:0019843">
    <property type="term" value="F:rRNA binding"/>
    <property type="evidence" value="ECO:0000250"/>
    <property type="project" value="PomBase"/>
</dbReference>
<dbReference type="GO" id="GO:0003735">
    <property type="term" value="F:structural constituent of ribosome"/>
    <property type="evidence" value="ECO:0000266"/>
    <property type="project" value="PomBase"/>
</dbReference>
<dbReference type="GO" id="GO:0008270">
    <property type="term" value="F:zinc ion binding"/>
    <property type="evidence" value="ECO:0000250"/>
    <property type="project" value="PomBase"/>
</dbReference>
<dbReference type="GO" id="GO:0002181">
    <property type="term" value="P:cytoplasmic translation"/>
    <property type="evidence" value="ECO:0000266"/>
    <property type="project" value="PomBase"/>
</dbReference>
<dbReference type="FunFam" id="2.20.25.30:FF:000001">
    <property type="entry name" value="Ribosomal protein L37"/>
    <property type="match status" value="1"/>
</dbReference>
<dbReference type="Gene3D" id="2.20.25.30">
    <property type="match status" value="1"/>
</dbReference>
<dbReference type="InterPro" id="IPR001569">
    <property type="entry name" value="Ribosomal_eL37"/>
</dbReference>
<dbReference type="InterPro" id="IPR011331">
    <property type="entry name" value="Ribosomal_eL37/eL43"/>
</dbReference>
<dbReference type="InterPro" id="IPR018267">
    <property type="entry name" value="Ribosomal_eL37_CS"/>
</dbReference>
<dbReference type="InterPro" id="IPR011332">
    <property type="entry name" value="Ribosomal_zn-bd"/>
</dbReference>
<dbReference type="PANTHER" id="PTHR10768">
    <property type="entry name" value="60S RIBOSOMAL PROTEIN L37"/>
    <property type="match status" value="1"/>
</dbReference>
<dbReference type="PANTHER" id="PTHR10768:SF0">
    <property type="entry name" value="RIBOSOMAL PROTEIN L37"/>
    <property type="match status" value="1"/>
</dbReference>
<dbReference type="Pfam" id="PF01907">
    <property type="entry name" value="Ribosomal_L37e"/>
    <property type="match status" value="1"/>
</dbReference>
<dbReference type="SUPFAM" id="SSF57829">
    <property type="entry name" value="Zn-binding ribosomal proteins"/>
    <property type="match status" value="1"/>
</dbReference>
<dbReference type="PROSITE" id="PS01077">
    <property type="entry name" value="RIBOSOMAL_L37E"/>
    <property type="match status" value="1"/>
</dbReference>